<feature type="chain" id="PRO_0000395913" description="Pup--protein ligase">
    <location>
        <begin position="1"/>
        <end position="452"/>
    </location>
</feature>
<feature type="active site" description="Proton acceptor" evidence="1">
    <location>
        <position position="57"/>
    </location>
</feature>
<feature type="binding site" evidence="1">
    <location>
        <position position="9"/>
    </location>
    <ligand>
        <name>Mg(2+)</name>
        <dbReference type="ChEBI" id="CHEBI:18420"/>
    </ligand>
</feature>
<feature type="binding site" evidence="1">
    <location>
        <position position="53"/>
    </location>
    <ligand>
        <name>ATP</name>
        <dbReference type="ChEBI" id="CHEBI:30616"/>
    </ligand>
</feature>
<feature type="binding site" evidence="1">
    <location>
        <position position="55"/>
    </location>
    <ligand>
        <name>Mg(2+)</name>
        <dbReference type="ChEBI" id="CHEBI:18420"/>
    </ligand>
</feature>
<feature type="binding site" evidence="1">
    <location>
        <position position="63"/>
    </location>
    <ligand>
        <name>Mg(2+)</name>
        <dbReference type="ChEBI" id="CHEBI:18420"/>
    </ligand>
</feature>
<feature type="binding site" evidence="1">
    <location>
        <position position="66"/>
    </location>
    <ligand>
        <name>ATP</name>
        <dbReference type="ChEBI" id="CHEBI:30616"/>
    </ligand>
</feature>
<feature type="binding site" evidence="1">
    <location>
        <position position="419"/>
    </location>
    <ligand>
        <name>ATP</name>
        <dbReference type="ChEBI" id="CHEBI:30616"/>
    </ligand>
</feature>
<proteinExistence type="inferred from homology"/>
<sequence>MDRRIFGLENEYGVTCVFRGQRRLSPDEVARYLFRRVVSWGRSSNVFLKNGARLYLDVGSHPEYATPECDSVPDLVTHDKAGERILEGLLVEAERRLREEGIAGDIHLFKNNTDSAGNSYGCHENYLVGRHGEFSKLADVLVPFLVSRQILCGAGKVLQTPRGAVYCISQRAEHIWESVSSATTRSRPIINTRDEPHADAERFRRLHVIVGDSNMSETTMLLKLGSTDLVLRMIEAGVMLRDMTLENPIRAIREVSHDMTCQRKIKLANGREVSALDIQREYYSKAVEFVERRGGDEVAKRVLDLWGRTLLAIETDDLELVAREIDWVTKYVLIERFRHKHGLSLASPRVAELDLKYHDIHRDRGLYYRMERAGLVERVTRDLDVFEAKSRPPQTTRARLRGEFIKRAQEKRRDFTVDWVHLKLNDQAQRTVLCKDPFRSVDDRVDKLIASM</sequence>
<accession>Q0RLT2</accession>
<keyword id="KW-0067">ATP-binding</keyword>
<keyword id="KW-0436">Ligase</keyword>
<keyword id="KW-0460">Magnesium</keyword>
<keyword id="KW-0479">Metal-binding</keyword>
<keyword id="KW-0547">Nucleotide-binding</keyword>
<keyword id="KW-1185">Reference proteome</keyword>
<keyword id="KW-0833">Ubl conjugation pathway</keyword>
<dbReference type="EC" id="6.3.1.19" evidence="1"/>
<dbReference type="EMBL" id="CT573213">
    <property type="protein sequence ID" value="CAJ61522.1"/>
    <property type="status" value="ALT_INIT"/>
    <property type="molecule type" value="Genomic_DNA"/>
</dbReference>
<dbReference type="RefSeq" id="WP_041939239.1">
    <property type="nucleotide sequence ID" value="NC_008278.1"/>
</dbReference>
<dbReference type="SMR" id="Q0RLT2"/>
<dbReference type="STRING" id="326424.FRAAL2878"/>
<dbReference type="MEROPS" id="U72.001"/>
<dbReference type="KEGG" id="fal:FRAAL2878"/>
<dbReference type="eggNOG" id="COG0638">
    <property type="taxonomic scope" value="Bacteria"/>
</dbReference>
<dbReference type="HOGENOM" id="CLU_040524_0_1_11"/>
<dbReference type="OrthoDB" id="9760627at2"/>
<dbReference type="UniPathway" id="UPA00997"/>
<dbReference type="UniPathway" id="UPA00998"/>
<dbReference type="Proteomes" id="UP000000657">
    <property type="component" value="Chromosome"/>
</dbReference>
<dbReference type="GO" id="GO:0005524">
    <property type="term" value="F:ATP binding"/>
    <property type="evidence" value="ECO:0007669"/>
    <property type="project" value="UniProtKB-UniRule"/>
</dbReference>
<dbReference type="GO" id="GO:0016879">
    <property type="term" value="F:ligase activity, forming carbon-nitrogen bonds"/>
    <property type="evidence" value="ECO:0007669"/>
    <property type="project" value="InterPro"/>
</dbReference>
<dbReference type="GO" id="GO:0000287">
    <property type="term" value="F:magnesium ion binding"/>
    <property type="evidence" value="ECO:0007669"/>
    <property type="project" value="UniProtKB-UniRule"/>
</dbReference>
<dbReference type="GO" id="GO:0019787">
    <property type="term" value="F:ubiquitin-like protein transferase activity"/>
    <property type="evidence" value="ECO:0007669"/>
    <property type="project" value="UniProtKB-UniRule"/>
</dbReference>
<dbReference type="GO" id="GO:0019941">
    <property type="term" value="P:modification-dependent protein catabolic process"/>
    <property type="evidence" value="ECO:0007669"/>
    <property type="project" value="UniProtKB-UniRule"/>
</dbReference>
<dbReference type="GO" id="GO:0010498">
    <property type="term" value="P:proteasomal protein catabolic process"/>
    <property type="evidence" value="ECO:0007669"/>
    <property type="project" value="UniProtKB-UniRule"/>
</dbReference>
<dbReference type="GO" id="GO:0070490">
    <property type="term" value="P:protein pupylation"/>
    <property type="evidence" value="ECO:0007669"/>
    <property type="project" value="UniProtKB-UniRule"/>
</dbReference>
<dbReference type="HAMAP" id="MF_02111">
    <property type="entry name" value="Pup_ligase"/>
    <property type="match status" value="1"/>
</dbReference>
<dbReference type="InterPro" id="IPR022279">
    <property type="entry name" value="Pup_ligase"/>
</dbReference>
<dbReference type="InterPro" id="IPR004347">
    <property type="entry name" value="Pup_ligase/deamidase"/>
</dbReference>
<dbReference type="NCBIfam" id="TIGR03686">
    <property type="entry name" value="pupylate_PafA"/>
    <property type="match status" value="1"/>
</dbReference>
<dbReference type="PANTHER" id="PTHR42307">
    <property type="entry name" value="PUP DEAMIDASE/DEPUPYLASE"/>
    <property type="match status" value="1"/>
</dbReference>
<dbReference type="PANTHER" id="PTHR42307:SF3">
    <property type="entry name" value="PUP--PROTEIN LIGASE"/>
    <property type="match status" value="1"/>
</dbReference>
<dbReference type="Pfam" id="PF03136">
    <property type="entry name" value="Pup_ligase"/>
    <property type="match status" value="1"/>
</dbReference>
<dbReference type="PIRSF" id="PIRSF018077">
    <property type="entry name" value="UCP018077"/>
    <property type="match status" value="1"/>
</dbReference>
<comment type="function">
    <text evidence="1">Catalyzes the covalent attachment of the prokaryotic ubiquitin-like protein modifier Pup to the proteasomal substrate proteins, thereby targeting them for proteasomal degradation. This tagging system is termed pupylation. The ligation reaction involves the side-chain carboxylate of the C-terminal glutamate of Pup and the side-chain amino group of a substrate lysine.</text>
</comment>
<comment type="catalytic activity">
    <reaction evidence="1">
        <text>ATP + [prokaryotic ubiquitin-like protein]-L-glutamate + [protein]-L-lysine = ADP + phosphate + N(6)-([prokaryotic ubiquitin-like protein]-gamma-L-glutamyl)-[protein]-L-lysine.</text>
        <dbReference type="EC" id="6.3.1.19"/>
    </reaction>
</comment>
<comment type="pathway">
    <text evidence="1">Protein degradation; proteasomal Pup-dependent pathway.</text>
</comment>
<comment type="pathway">
    <text evidence="1">Protein modification; protein pupylation.</text>
</comment>
<comment type="miscellaneous">
    <text evidence="1">The reaction mechanism probably proceeds via the activation of Pup by phosphorylation of its C-terminal glutamate, which is then subject to nucleophilic attack by the substrate lysine, resulting in an isopeptide bond and the release of phosphate as a good leaving group.</text>
</comment>
<comment type="similarity">
    <text evidence="1">Belongs to the Pup ligase/Pup deamidase family. Pup-conjugating enzyme subfamily.</text>
</comment>
<comment type="sequence caution" evidence="2">
    <conflict type="erroneous initiation">
        <sequence resource="EMBL-CDS" id="CAJ61522"/>
    </conflict>
    <text>Extended N-terminus.</text>
</comment>
<organism>
    <name type="scientific">Frankia alni (strain DSM 45986 / CECT 9034 / ACN14a)</name>
    <dbReference type="NCBI Taxonomy" id="326424"/>
    <lineage>
        <taxon>Bacteria</taxon>
        <taxon>Bacillati</taxon>
        <taxon>Actinomycetota</taxon>
        <taxon>Actinomycetes</taxon>
        <taxon>Frankiales</taxon>
        <taxon>Frankiaceae</taxon>
        <taxon>Frankia</taxon>
    </lineage>
</organism>
<gene>
    <name evidence="1" type="primary">pafA</name>
    <name type="ordered locus">FRAAL2878</name>
</gene>
<evidence type="ECO:0000255" key="1">
    <source>
        <dbReference type="HAMAP-Rule" id="MF_02111"/>
    </source>
</evidence>
<evidence type="ECO:0000305" key="2"/>
<protein>
    <recommendedName>
        <fullName evidence="1">Pup--protein ligase</fullName>
        <ecNumber evidence="1">6.3.1.19</ecNumber>
    </recommendedName>
    <alternativeName>
        <fullName evidence="1">Proteasome accessory factor A</fullName>
    </alternativeName>
    <alternativeName>
        <fullName evidence="1">Pup-conjugating enzyme</fullName>
    </alternativeName>
</protein>
<name>PAFA_FRAAA</name>
<reference key="1">
    <citation type="journal article" date="2007" name="Genome Res.">
        <title>Genome characteristics of facultatively symbiotic Frankia sp. strains reflect host range and host plant biogeography.</title>
        <authorList>
            <person name="Normand P."/>
            <person name="Lapierre P."/>
            <person name="Tisa L.S."/>
            <person name="Gogarten J.P."/>
            <person name="Alloisio N."/>
            <person name="Bagnarol E."/>
            <person name="Bassi C.A."/>
            <person name="Berry A.M."/>
            <person name="Bickhart D.M."/>
            <person name="Choisne N."/>
            <person name="Couloux A."/>
            <person name="Cournoyer B."/>
            <person name="Cruveiller S."/>
            <person name="Daubin V."/>
            <person name="Demange N."/>
            <person name="Francino M.P."/>
            <person name="Goltsman E."/>
            <person name="Huang Y."/>
            <person name="Kopp O.R."/>
            <person name="Labarre L."/>
            <person name="Lapidus A."/>
            <person name="Lavire C."/>
            <person name="Marechal J."/>
            <person name="Martinez M."/>
            <person name="Mastronunzio J.E."/>
            <person name="Mullin B.C."/>
            <person name="Niemann J."/>
            <person name="Pujic P."/>
            <person name="Rawnsley T."/>
            <person name="Rouy Z."/>
            <person name="Schenowitz C."/>
            <person name="Sellstedt A."/>
            <person name="Tavares F."/>
            <person name="Tomkins J.P."/>
            <person name="Vallenet D."/>
            <person name="Valverde C."/>
            <person name="Wall L.G."/>
            <person name="Wang Y."/>
            <person name="Medigue C."/>
            <person name="Benson D.R."/>
        </authorList>
    </citation>
    <scope>NUCLEOTIDE SEQUENCE [LARGE SCALE GENOMIC DNA]</scope>
    <source>
        <strain>DSM 45986 / CECT 9034 / ACN14a</strain>
    </source>
</reference>